<feature type="chain" id="PRO_0000209086" description="Potassium transporter 10">
    <location>
        <begin position="1"/>
        <end position="796"/>
    </location>
</feature>
<feature type="topological domain" description="Cytoplasmic" evidence="1">
    <location>
        <begin position="1"/>
        <end position="58"/>
    </location>
</feature>
<feature type="transmembrane region" description="Helical" evidence="1">
    <location>
        <begin position="59"/>
        <end position="79"/>
    </location>
</feature>
<feature type="topological domain" description="Extracellular" evidence="1">
    <location>
        <begin position="80"/>
        <end position="95"/>
    </location>
</feature>
<feature type="transmembrane region" description="Helical" evidence="1">
    <location>
        <begin position="96"/>
        <end position="116"/>
    </location>
</feature>
<feature type="topological domain" description="Cytoplasmic" evidence="1">
    <location>
        <begin position="117"/>
        <end position="184"/>
    </location>
</feature>
<feature type="transmembrane region" description="Helical" evidence="1">
    <location>
        <begin position="185"/>
        <end position="205"/>
    </location>
</feature>
<feature type="topological domain" description="Extracellular" evidence="1">
    <location>
        <begin position="206"/>
        <end position="217"/>
    </location>
</feature>
<feature type="transmembrane region" description="Helical" evidence="1">
    <location>
        <begin position="218"/>
        <end position="238"/>
    </location>
</feature>
<feature type="topological domain" description="Cytoplasmic" evidence="1">
    <location>
        <begin position="239"/>
        <end position="248"/>
    </location>
</feature>
<feature type="transmembrane region" description="Helical" evidence="1">
    <location>
        <begin position="249"/>
        <end position="269"/>
    </location>
</feature>
<feature type="topological domain" description="Extracellular" evidence="1">
    <location>
        <begin position="270"/>
        <end position="298"/>
    </location>
</feature>
<feature type="transmembrane region" description="Helical" evidence="1">
    <location>
        <begin position="299"/>
        <end position="319"/>
    </location>
</feature>
<feature type="topological domain" description="Cytoplasmic" evidence="1">
    <location>
        <begin position="320"/>
        <end position="321"/>
    </location>
</feature>
<feature type="transmembrane region" description="Helical" evidence="1">
    <location>
        <begin position="322"/>
        <end position="342"/>
    </location>
</feature>
<feature type="topological domain" description="Extracellular" evidence="1">
    <location>
        <begin position="343"/>
        <end position="368"/>
    </location>
</feature>
<feature type="transmembrane region" description="Helical" evidence="1">
    <location>
        <begin position="369"/>
        <end position="389"/>
    </location>
</feature>
<feature type="topological domain" description="Cytoplasmic" evidence="1">
    <location>
        <begin position="390"/>
        <end position="420"/>
    </location>
</feature>
<feature type="transmembrane region" description="Helical" evidence="1">
    <location>
        <begin position="421"/>
        <end position="441"/>
    </location>
</feature>
<feature type="topological domain" description="Extracellular" evidence="1">
    <location>
        <begin position="442"/>
        <end position="453"/>
    </location>
</feature>
<feature type="transmembrane region" description="Helical" evidence="1">
    <location>
        <begin position="454"/>
        <end position="474"/>
    </location>
</feature>
<feature type="topological domain" description="Cytoplasmic" evidence="1">
    <location>
        <begin position="475"/>
        <end position="480"/>
    </location>
</feature>
<feature type="transmembrane region" description="Helical" evidence="1">
    <location>
        <begin position="481"/>
        <end position="501"/>
    </location>
</feature>
<feature type="topological domain" description="Extracellular" evidence="1">
    <location>
        <begin position="502"/>
        <end position="505"/>
    </location>
</feature>
<feature type="transmembrane region" description="Helical" evidence="1">
    <location>
        <begin position="506"/>
        <end position="526"/>
    </location>
</feature>
<feature type="topological domain" description="Cytoplasmic" evidence="1">
    <location>
        <begin position="527"/>
        <end position="796"/>
    </location>
</feature>
<feature type="region of interest" description="Disordered" evidence="2">
    <location>
        <begin position="1"/>
        <end position="30"/>
    </location>
</feature>
<dbReference type="EMBL" id="AC004793">
    <property type="protein sequence ID" value="AAD21693.1"/>
    <property type="status" value="ALT_SEQ"/>
    <property type="molecule type" value="Genomic_DNA"/>
</dbReference>
<dbReference type="EMBL" id="CP002684">
    <property type="protein sequence ID" value="AEE31314.1"/>
    <property type="molecule type" value="Genomic_DNA"/>
</dbReference>
<dbReference type="EMBL" id="AK229208">
    <property type="protein sequence ID" value="BAF01077.1"/>
    <property type="molecule type" value="mRNA"/>
</dbReference>
<dbReference type="PIR" id="G86436">
    <property type="entry name" value="G86436"/>
</dbReference>
<dbReference type="RefSeq" id="NP_174397.2">
    <property type="nucleotide sequence ID" value="NM_102850.4"/>
</dbReference>
<dbReference type="BioGRID" id="25232">
    <property type="interactions" value="2"/>
</dbReference>
<dbReference type="FunCoup" id="Q9SA05">
    <property type="interactions" value="67"/>
</dbReference>
<dbReference type="IntAct" id="Q9SA05">
    <property type="interactions" value="2"/>
</dbReference>
<dbReference type="STRING" id="3702.Q9SA05"/>
<dbReference type="GlyGen" id="Q9SA05">
    <property type="glycosylation" value="1 site"/>
</dbReference>
<dbReference type="PaxDb" id="3702-AT1G31120.1"/>
<dbReference type="ProteomicsDB" id="249393"/>
<dbReference type="EnsemblPlants" id="AT1G31120.1">
    <property type="protein sequence ID" value="AT1G31120.1"/>
    <property type="gene ID" value="AT1G31120"/>
</dbReference>
<dbReference type="GeneID" id="839997"/>
<dbReference type="Gramene" id="AT1G31120.1">
    <property type="protein sequence ID" value="AT1G31120.1"/>
    <property type="gene ID" value="AT1G31120"/>
</dbReference>
<dbReference type="KEGG" id="ath:AT1G31120"/>
<dbReference type="Araport" id="AT1G31120"/>
<dbReference type="TAIR" id="AT1G31120">
    <property type="gene designation" value="KUP10"/>
</dbReference>
<dbReference type="eggNOG" id="ENOG502QPSA">
    <property type="taxonomic scope" value="Eukaryota"/>
</dbReference>
<dbReference type="HOGENOM" id="CLU_008142_2_0_1"/>
<dbReference type="InParanoid" id="Q9SA05"/>
<dbReference type="OMA" id="NIWKHDP"/>
<dbReference type="OrthoDB" id="504708at2759"/>
<dbReference type="PhylomeDB" id="Q9SA05"/>
<dbReference type="PRO" id="PR:Q9SA05"/>
<dbReference type="Proteomes" id="UP000006548">
    <property type="component" value="Chromosome 1"/>
</dbReference>
<dbReference type="ExpressionAtlas" id="Q9SA05">
    <property type="expression patterns" value="baseline and differential"/>
</dbReference>
<dbReference type="GO" id="GO:0005886">
    <property type="term" value="C:plasma membrane"/>
    <property type="evidence" value="ECO:0007669"/>
    <property type="project" value="UniProtKB-SubCell"/>
</dbReference>
<dbReference type="GO" id="GO:0015079">
    <property type="term" value="F:potassium ion transmembrane transporter activity"/>
    <property type="evidence" value="ECO:0007669"/>
    <property type="project" value="InterPro"/>
</dbReference>
<dbReference type="InterPro" id="IPR003855">
    <property type="entry name" value="K+_transporter"/>
</dbReference>
<dbReference type="InterPro" id="IPR053952">
    <property type="entry name" value="K_trans_C"/>
</dbReference>
<dbReference type="InterPro" id="IPR053951">
    <property type="entry name" value="K_trans_N"/>
</dbReference>
<dbReference type="NCBIfam" id="TIGR00794">
    <property type="entry name" value="kup"/>
    <property type="match status" value="1"/>
</dbReference>
<dbReference type="PANTHER" id="PTHR30540">
    <property type="entry name" value="OSMOTIC STRESS POTASSIUM TRANSPORTER"/>
    <property type="match status" value="1"/>
</dbReference>
<dbReference type="PANTHER" id="PTHR30540:SF95">
    <property type="entry name" value="POTASSIUM TRANSPORTER 10"/>
    <property type="match status" value="1"/>
</dbReference>
<dbReference type="Pfam" id="PF02705">
    <property type="entry name" value="K_trans"/>
    <property type="match status" value="1"/>
</dbReference>
<dbReference type="Pfam" id="PF22776">
    <property type="entry name" value="K_trans_C"/>
    <property type="match status" value="1"/>
</dbReference>
<keyword id="KW-1003">Cell membrane</keyword>
<keyword id="KW-0406">Ion transport</keyword>
<keyword id="KW-0472">Membrane</keyword>
<keyword id="KW-0630">Potassium</keyword>
<keyword id="KW-0633">Potassium transport</keyword>
<keyword id="KW-1185">Reference proteome</keyword>
<keyword id="KW-0812">Transmembrane</keyword>
<keyword id="KW-1133">Transmembrane helix</keyword>
<keyword id="KW-0813">Transport</keyword>
<comment type="function">
    <text>Putative potassium transporter.</text>
</comment>
<comment type="subcellular location">
    <subcellularLocation>
        <location evidence="3">Cell membrane</location>
        <topology evidence="3">Multi-pass membrane protein</topology>
    </subcellularLocation>
</comment>
<comment type="similarity">
    <text evidence="3">Belongs to the HAK/KUP transporter (TC 2.A.72.3) family.</text>
</comment>
<comment type="sequence caution" evidence="3">
    <conflict type="erroneous gene model prediction">
        <sequence resource="EMBL-CDS" id="AAD21693"/>
    </conflict>
</comment>
<gene>
    <name type="primary">POT10</name>
    <name type="synonym">KUP10</name>
    <name type="ordered locus">At1g31120</name>
    <name type="ORF">F28K20.5</name>
</gene>
<reference key="1">
    <citation type="journal article" date="2000" name="Nature">
        <title>Sequence and analysis of chromosome 1 of the plant Arabidopsis thaliana.</title>
        <authorList>
            <person name="Theologis A."/>
            <person name="Ecker J.R."/>
            <person name="Palm C.J."/>
            <person name="Federspiel N.A."/>
            <person name="Kaul S."/>
            <person name="White O."/>
            <person name="Alonso J."/>
            <person name="Altafi H."/>
            <person name="Araujo R."/>
            <person name="Bowman C.L."/>
            <person name="Brooks S.Y."/>
            <person name="Buehler E."/>
            <person name="Chan A."/>
            <person name="Chao Q."/>
            <person name="Chen H."/>
            <person name="Cheuk R.F."/>
            <person name="Chin C.W."/>
            <person name="Chung M.K."/>
            <person name="Conn L."/>
            <person name="Conway A.B."/>
            <person name="Conway A.R."/>
            <person name="Creasy T.H."/>
            <person name="Dewar K."/>
            <person name="Dunn P."/>
            <person name="Etgu P."/>
            <person name="Feldblyum T.V."/>
            <person name="Feng J.-D."/>
            <person name="Fong B."/>
            <person name="Fujii C.Y."/>
            <person name="Gill J.E."/>
            <person name="Goldsmith A.D."/>
            <person name="Haas B."/>
            <person name="Hansen N.F."/>
            <person name="Hughes B."/>
            <person name="Huizar L."/>
            <person name="Hunter J.L."/>
            <person name="Jenkins J."/>
            <person name="Johnson-Hopson C."/>
            <person name="Khan S."/>
            <person name="Khaykin E."/>
            <person name="Kim C.J."/>
            <person name="Koo H.L."/>
            <person name="Kremenetskaia I."/>
            <person name="Kurtz D.B."/>
            <person name="Kwan A."/>
            <person name="Lam B."/>
            <person name="Langin-Hooper S."/>
            <person name="Lee A."/>
            <person name="Lee J.M."/>
            <person name="Lenz C.A."/>
            <person name="Li J.H."/>
            <person name="Li Y.-P."/>
            <person name="Lin X."/>
            <person name="Liu S.X."/>
            <person name="Liu Z.A."/>
            <person name="Luros J.S."/>
            <person name="Maiti R."/>
            <person name="Marziali A."/>
            <person name="Militscher J."/>
            <person name="Miranda M."/>
            <person name="Nguyen M."/>
            <person name="Nierman W.C."/>
            <person name="Osborne B.I."/>
            <person name="Pai G."/>
            <person name="Peterson J."/>
            <person name="Pham P.K."/>
            <person name="Rizzo M."/>
            <person name="Rooney T."/>
            <person name="Rowley D."/>
            <person name="Sakano H."/>
            <person name="Salzberg S.L."/>
            <person name="Schwartz J.R."/>
            <person name="Shinn P."/>
            <person name="Southwick A.M."/>
            <person name="Sun H."/>
            <person name="Tallon L.J."/>
            <person name="Tambunga G."/>
            <person name="Toriumi M.J."/>
            <person name="Town C.D."/>
            <person name="Utterback T."/>
            <person name="Van Aken S."/>
            <person name="Vaysberg M."/>
            <person name="Vysotskaia V.S."/>
            <person name="Walker M."/>
            <person name="Wu D."/>
            <person name="Yu G."/>
            <person name="Fraser C.M."/>
            <person name="Venter J.C."/>
            <person name="Davis R.W."/>
        </authorList>
    </citation>
    <scope>NUCLEOTIDE SEQUENCE [LARGE SCALE GENOMIC DNA]</scope>
    <source>
        <strain>cv. Columbia</strain>
    </source>
</reference>
<reference key="2">
    <citation type="journal article" date="2017" name="Plant J.">
        <title>Araport11: a complete reannotation of the Arabidopsis thaliana reference genome.</title>
        <authorList>
            <person name="Cheng C.Y."/>
            <person name="Krishnakumar V."/>
            <person name="Chan A.P."/>
            <person name="Thibaud-Nissen F."/>
            <person name="Schobel S."/>
            <person name="Town C.D."/>
        </authorList>
    </citation>
    <scope>GENOME REANNOTATION</scope>
    <source>
        <strain>cv. Columbia</strain>
    </source>
</reference>
<reference key="3">
    <citation type="submission" date="2006-07" db="EMBL/GenBank/DDBJ databases">
        <title>Large-scale analysis of RIKEN Arabidopsis full-length (RAFL) cDNAs.</title>
        <authorList>
            <person name="Totoki Y."/>
            <person name="Seki M."/>
            <person name="Ishida J."/>
            <person name="Nakajima M."/>
            <person name="Enju A."/>
            <person name="Kamiya A."/>
            <person name="Narusaka M."/>
            <person name="Shin-i T."/>
            <person name="Nakagawa M."/>
            <person name="Sakamoto N."/>
            <person name="Oishi K."/>
            <person name="Kohara Y."/>
            <person name="Kobayashi M."/>
            <person name="Toyoda A."/>
            <person name="Sakaki Y."/>
            <person name="Sakurai T."/>
            <person name="Iida K."/>
            <person name="Akiyama K."/>
            <person name="Satou M."/>
            <person name="Toyoda T."/>
            <person name="Konagaya A."/>
            <person name="Carninci P."/>
            <person name="Kawai J."/>
            <person name="Hayashizaki Y."/>
            <person name="Shinozaki K."/>
        </authorList>
    </citation>
    <scope>NUCLEOTIDE SEQUENCE [LARGE SCALE MRNA]</scope>
    <source>
        <strain>cv. Columbia</strain>
    </source>
</reference>
<reference key="4">
    <citation type="journal article" date="2001" name="Plant Physiol.">
        <title>Phylogenetic relationships within cation transporter families of Arabidopsis.</title>
        <authorList>
            <person name="Maeser P."/>
            <person name="Thomine S."/>
            <person name="Schroeder J.I."/>
            <person name="Ward J.M."/>
            <person name="Hirschi K."/>
            <person name="Sze H."/>
            <person name="Talke I.N."/>
            <person name="Amtmann A."/>
            <person name="Maathuis F.J.M."/>
            <person name="Sanders D."/>
            <person name="Harper J.F."/>
            <person name="Tchieu J."/>
            <person name="Gribskov M."/>
            <person name="Persans M.W."/>
            <person name="Salt D.E."/>
            <person name="Kim S.A."/>
            <person name="Guerinot M.L."/>
        </authorList>
    </citation>
    <scope>GENE FAMILY</scope>
    <scope>NOMENCLATURE</scope>
</reference>
<sequence>MAGRVESSIGGGEIDEEGDERGSMWDLDQSLDQPMDEEAGRLRNMYREKKFSAFLLLQLSFQSLGVVYGDLGTSPLYVFYNTFPRGIKDPEDIIGALSLIIYSLTLIPLLKYVFVVCKANDNGQGGTFALYSLLCRHAKVSTIPNQHRTDEELTTYSRTTFHERSFAAKTKRWLENGTSRKNALLILVLVGTCMVIGDGILTPAISVLSAAGGLRVNLPHINNGIVVVVAVVILVSLFSVQHYGTDRVGWLFAPIVFLWFLFIASIGMFNIWKHDPSVLKAFSPVYIFRYFKRGGQDRWTSLGGIMLSITGIEALFADLSHFPVSAVQFAFTVIVFPCLLLAYSGQAAYLRKYPHHVEDAFYQSIPKRVYWPMFIIATAAAIVASQATISATFSLIKQALAHGCFPRVKVVHTSRKFLGQIYVPDINWILMILCIAVTAGFKNQNQIGNAYGTAVVIVMLVTTLLMMLIMILVWRCHWVLVLLFTLLSLVVECTYFSAVLFKVNQGGWVPLVIAAAFLVIMYVWHYGTLKRYEFEMHSKVSMAWILGLGPSLGLVRVPGIGLVYTELASGVPHIFSHFITNLPATHSVVIFVCVKNLPVYTVPQEERFLVKRIGPKNFHMFRCVARYGYRDLHKKDDDFEKRLFESLFLFLRLESMMEGCSDSEDYSVCGSQQRQSRDGVNGNGNEIRNVSTFDTFDSIESVIAPTTTKRTSHTVTGSSQMSGGGDEVEFINGCRDAGVVHIMGNTVVRARREARFYKRIAIDYVYAFLRKICRENSAIFNVPQESLLNVGQIFYV</sequence>
<accession>Q9SA05</accession>
<accession>Q0WP72</accession>
<proteinExistence type="evidence at transcript level"/>
<evidence type="ECO:0000255" key="1"/>
<evidence type="ECO:0000256" key="2">
    <source>
        <dbReference type="SAM" id="MobiDB-lite"/>
    </source>
</evidence>
<evidence type="ECO:0000305" key="3"/>
<protein>
    <recommendedName>
        <fullName>Potassium transporter 10</fullName>
        <shortName>AtPOT10</shortName>
    </recommendedName>
</protein>
<name>POT10_ARATH</name>
<organism>
    <name type="scientific">Arabidopsis thaliana</name>
    <name type="common">Mouse-ear cress</name>
    <dbReference type="NCBI Taxonomy" id="3702"/>
    <lineage>
        <taxon>Eukaryota</taxon>
        <taxon>Viridiplantae</taxon>
        <taxon>Streptophyta</taxon>
        <taxon>Embryophyta</taxon>
        <taxon>Tracheophyta</taxon>
        <taxon>Spermatophyta</taxon>
        <taxon>Magnoliopsida</taxon>
        <taxon>eudicotyledons</taxon>
        <taxon>Gunneridae</taxon>
        <taxon>Pentapetalae</taxon>
        <taxon>rosids</taxon>
        <taxon>malvids</taxon>
        <taxon>Brassicales</taxon>
        <taxon>Brassicaceae</taxon>
        <taxon>Camelineae</taxon>
        <taxon>Arabidopsis</taxon>
    </lineage>
</organism>